<reference key="1">
    <citation type="journal article" date="2008" name="J. Biotechnol.">
        <title>The genome of Xanthomonas campestris pv. campestris B100 and its use for the reconstruction of metabolic pathways involved in xanthan biosynthesis.</title>
        <authorList>
            <person name="Vorhoelter F.-J."/>
            <person name="Schneiker S."/>
            <person name="Goesmann A."/>
            <person name="Krause L."/>
            <person name="Bekel T."/>
            <person name="Kaiser O."/>
            <person name="Linke B."/>
            <person name="Patschkowski T."/>
            <person name="Rueckert C."/>
            <person name="Schmid J."/>
            <person name="Sidhu V.K."/>
            <person name="Sieber V."/>
            <person name="Tauch A."/>
            <person name="Watt S.A."/>
            <person name="Weisshaar B."/>
            <person name="Becker A."/>
            <person name="Niehaus K."/>
            <person name="Puehler A."/>
        </authorList>
    </citation>
    <scope>NUCLEOTIDE SEQUENCE [LARGE SCALE GENOMIC DNA]</scope>
    <source>
        <strain>B100</strain>
    </source>
</reference>
<protein>
    <recommendedName>
        <fullName evidence="1">Small ribosomal subunit protein uS8</fullName>
    </recommendedName>
    <alternativeName>
        <fullName evidence="2">30S ribosomal protein S8</fullName>
    </alternativeName>
</protein>
<dbReference type="EMBL" id="AM920689">
    <property type="protein sequence ID" value="CAP52810.1"/>
    <property type="molecule type" value="Genomic_DNA"/>
</dbReference>
<dbReference type="SMR" id="B0RU68"/>
<dbReference type="KEGG" id="xca:xcc-b100_3445"/>
<dbReference type="HOGENOM" id="CLU_098428_0_0_6"/>
<dbReference type="Proteomes" id="UP000001188">
    <property type="component" value="Chromosome"/>
</dbReference>
<dbReference type="GO" id="GO:1990904">
    <property type="term" value="C:ribonucleoprotein complex"/>
    <property type="evidence" value="ECO:0007669"/>
    <property type="project" value="UniProtKB-KW"/>
</dbReference>
<dbReference type="GO" id="GO:0005840">
    <property type="term" value="C:ribosome"/>
    <property type="evidence" value="ECO:0007669"/>
    <property type="project" value="UniProtKB-KW"/>
</dbReference>
<dbReference type="GO" id="GO:0019843">
    <property type="term" value="F:rRNA binding"/>
    <property type="evidence" value="ECO:0007669"/>
    <property type="project" value="UniProtKB-UniRule"/>
</dbReference>
<dbReference type="GO" id="GO:0003735">
    <property type="term" value="F:structural constituent of ribosome"/>
    <property type="evidence" value="ECO:0007669"/>
    <property type="project" value="InterPro"/>
</dbReference>
<dbReference type="GO" id="GO:0006412">
    <property type="term" value="P:translation"/>
    <property type="evidence" value="ECO:0007669"/>
    <property type="project" value="UniProtKB-UniRule"/>
</dbReference>
<dbReference type="FunFam" id="3.30.1370.30:FF:000003">
    <property type="entry name" value="30S ribosomal protein S8"/>
    <property type="match status" value="1"/>
</dbReference>
<dbReference type="FunFam" id="3.30.1490.10:FF:000001">
    <property type="entry name" value="30S ribosomal protein S8"/>
    <property type="match status" value="1"/>
</dbReference>
<dbReference type="Gene3D" id="3.30.1370.30">
    <property type="match status" value="1"/>
</dbReference>
<dbReference type="Gene3D" id="3.30.1490.10">
    <property type="match status" value="1"/>
</dbReference>
<dbReference type="HAMAP" id="MF_01302_B">
    <property type="entry name" value="Ribosomal_uS8_B"/>
    <property type="match status" value="1"/>
</dbReference>
<dbReference type="InterPro" id="IPR000630">
    <property type="entry name" value="Ribosomal_uS8"/>
</dbReference>
<dbReference type="InterPro" id="IPR047863">
    <property type="entry name" value="Ribosomal_uS8_CS"/>
</dbReference>
<dbReference type="InterPro" id="IPR035987">
    <property type="entry name" value="Ribosomal_uS8_sf"/>
</dbReference>
<dbReference type="NCBIfam" id="NF001109">
    <property type="entry name" value="PRK00136.1"/>
    <property type="match status" value="1"/>
</dbReference>
<dbReference type="PANTHER" id="PTHR11758">
    <property type="entry name" value="40S RIBOSOMAL PROTEIN S15A"/>
    <property type="match status" value="1"/>
</dbReference>
<dbReference type="Pfam" id="PF00410">
    <property type="entry name" value="Ribosomal_S8"/>
    <property type="match status" value="1"/>
</dbReference>
<dbReference type="SUPFAM" id="SSF56047">
    <property type="entry name" value="Ribosomal protein S8"/>
    <property type="match status" value="1"/>
</dbReference>
<dbReference type="PROSITE" id="PS00053">
    <property type="entry name" value="RIBOSOMAL_S8"/>
    <property type="match status" value="1"/>
</dbReference>
<gene>
    <name evidence="1" type="primary">rpsH</name>
    <name type="ordered locus">xcc-b100_3445</name>
</gene>
<feature type="chain" id="PRO_1000140637" description="Small ribosomal subunit protein uS8">
    <location>
        <begin position="1"/>
        <end position="132"/>
    </location>
</feature>
<keyword id="KW-0687">Ribonucleoprotein</keyword>
<keyword id="KW-0689">Ribosomal protein</keyword>
<keyword id="KW-0694">RNA-binding</keyword>
<keyword id="KW-0699">rRNA-binding</keyword>
<organism>
    <name type="scientific">Xanthomonas campestris pv. campestris (strain B100)</name>
    <dbReference type="NCBI Taxonomy" id="509169"/>
    <lineage>
        <taxon>Bacteria</taxon>
        <taxon>Pseudomonadati</taxon>
        <taxon>Pseudomonadota</taxon>
        <taxon>Gammaproteobacteria</taxon>
        <taxon>Lysobacterales</taxon>
        <taxon>Lysobacteraceae</taxon>
        <taxon>Xanthomonas</taxon>
    </lineage>
</organism>
<name>RS8_XANCB</name>
<evidence type="ECO:0000255" key="1">
    <source>
        <dbReference type="HAMAP-Rule" id="MF_01302"/>
    </source>
</evidence>
<evidence type="ECO:0000305" key="2"/>
<comment type="function">
    <text evidence="1">One of the primary rRNA binding proteins, it binds directly to 16S rRNA central domain where it helps coordinate assembly of the platform of the 30S subunit.</text>
</comment>
<comment type="subunit">
    <text evidence="1">Part of the 30S ribosomal subunit. Contacts proteins S5 and S12.</text>
</comment>
<comment type="similarity">
    <text evidence="1">Belongs to the universal ribosomal protein uS8 family.</text>
</comment>
<proteinExistence type="inferred from homology"/>
<accession>B0RU68</accession>
<sequence length="132" mass="14264">MSMTDPIADLLVRIKNAAAVGKQTVKLPSSKIKVAIAQVLKDEGYITDLRVTATENNKSELEIVLKYFEGRPVIETLKRFSRSGLRQYRGKTELPKVLGGLGIAIISTSKGIMTDAQAREAGVGGEVLCFVA</sequence>